<reference key="1">
    <citation type="journal article" date="2003" name="J. Bacteriol.">
        <title>Comparative analyses of the complete genome sequences of Pierce's disease and citrus variegated chlorosis strains of Xylella fastidiosa.</title>
        <authorList>
            <person name="Van Sluys M.A."/>
            <person name="de Oliveira M.C."/>
            <person name="Monteiro-Vitorello C.B."/>
            <person name="Miyaki C.Y."/>
            <person name="Furlan L.R."/>
            <person name="Camargo L.E.A."/>
            <person name="da Silva A.C.R."/>
            <person name="Moon D.H."/>
            <person name="Takita M.A."/>
            <person name="Lemos E.G.M."/>
            <person name="Machado M.A."/>
            <person name="Ferro M.I.T."/>
            <person name="da Silva F.R."/>
            <person name="Goldman M.H.S."/>
            <person name="Goldman G.H."/>
            <person name="Lemos M.V.F."/>
            <person name="El-Dorry H."/>
            <person name="Tsai S.M."/>
            <person name="Carrer H."/>
            <person name="Carraro D.M."/>
            <person name="de Oliveira R.C."/>
            <person name="Nunes L.R."/>
            <person name="Siqueira W.J."/>
            <person name="Coutinho L.L."/>
            <person name="Kimura E.T."/>
            <person name="Ferro E.S."/>
            <person name="Harakava R."/>
            <person name="Kuramae E.E."/>
            <person name="Marino C.L."/>
            <person name="Giglioti E."/>
            <person name="Abreu I.L."/>
            <person name="Alves L.M.C."/>
            <person name="do Amaral A.M."/>
            <person name="Baia G.S."/>
            <person name="Blanco S.R."/>
            <person name="Brito M.S."/>
            <person name="Cannavan F.S."/>
            <person name="Celestino A.V."/>
            <person name="da Cunha A.F."/>
            <person name="Fenille R.C."/>
            <person name="Ferro J.A."/>
            <person name="Formighieri E.F."/>
            <person name="Kishi L.T."/>
            <person name="Leoni S.G."/>
            <person name="Oliveira A.R."/>
            <person name="Rosa V.E. Jr."/>
            <person name="Sassaki F.T."/>
            <person name="Sena J.A.D."/>
            <person name="de Souza A.A."/>
            <person name="Truffi D."/>
            <person name="Tsukumo F."/>
            <person name="Yanai G.M."/>
            <person name="Zaros L.G."/>
            <person name="Civerolo E.L."/>
            <person name="Simpson A.J.G."/>
            <person name="Almeida N.F. Jr."/>
            <person name="Setubal J.C."/>
            <person name="Kitajima J.P."/>
        </authorList>
    </citation>
    <scope>NUCLEOTIDE SEQUENCE [LARGE SCALE GENOMIC DNA]</scope>
    <source>
        <strain>Temecula1 / ATCC 700964</strain>
    </source>
</reference>
<accession>Q87A30</accession>
<organism>
    <name type="scientific">Xylella fastidiosa (strain Temecula1 / ATCC 700964)</name>
    <dbReference type="NCBI Taxonomy" id="183190"/>
    <lineage>
        <taxon>Bacteria</taxon>
        <taxon>Pseudomonadati</taxon>
        <taxon>Pseudomonadota</taxon>
        <taxon>Gammaproteobacteria</taxon>
        <taxon>Lysobacterales</taxon>
        <taxon>Lysobacteraceae</taxon>
        <taxon>Xylella</taxon>
    </lineage>
</organism>
<evidence type="ECO:0000255" key="1">
    <source>
        <dbReference type="HAMAP-Rule" id="MF_00362"/>
    </source>
</evidence>
<evidence type="ECO:0000305" key="2"/>
<dbReference type="EMBL" id="AE009442">
    <property type="protein sequence ID" value="AAO29832.1"/>
    <property type="molecule type" value="Genomic_DNA"/>
</dbReference>
<dbReference type="RefSeq" id="WP_004090729.1">
    <property type="nucleotide sequence ID" value="NC_004556.1"/>
</dbReference>
<dbReference type="SMR" id="Q87A30"/>
<dbReference type="GeneID" id="93905864"/>
<dbReference type="KEGG" id="xft:PD_2003"/>
<dbReference type="HOGENOM" id="CLU_092227_0_1_6"/>
<dbReference type="Proteomes" id="UP000002516">
    <property type="component" value="Chromosome"/>
</dbReference>
<dbReference type="GO" id="GO:0015934">
    <property type="term" value="C:large ribosomal subunit"/>
    <property type="evidence" value="ECO:0007669"/>
    <property type="project" value="InterPro"/>
</dbReference>
<dbReference type="GO" id="GO:0070180">
    <property type="term" value="F:large ribosomal subunit rRNA binding"/>
    <property type="evidence" value="ECO:0007669"/>
    <property type="project" value="UniProtKB-UniRule"/>
</dbReference>
<dbReference type="GO" id="GO:0003735">
    <property type="term" value="F:structural constituent of ribosome"/>
    <property type="evidence" value="ECO:0007669"/>
    <property type="project" value="InterPro"/>
</dbReference>
<dbReference type="GO" id="GO:0006412">
    <property type="term" value="P:translation"/>
    <property type="evidence" value="ECO:0007669"/>
    <property type="project" value="UniProtKB-UniRule"/>
</dbReference>
<dbReference type="CDD" id="cd05797">
    <property type="entry name" value="Ribosomal_L10"/>
    <property type="match status" value="1"/>
</dbReference>
<dbReference type="Gene3D" id="3.30.70.1730">
    <property type="match status" value="1"/>
</dbReference>
<dbReference type="HAMAP" id="MF_00362">
    <property type="entry name" value="Ribosomal_uL10"/>
    <property type="match status" value="1"/>
</dbReference>
<dbReference type="InterPro" id="IPR001790">
    <property type="entry name" value="Ribosomal_uL10"/>
</dbReference>
<dbReference type="InterPro" id="IPR043141">
    <property type="entry name" value="Ribosomal_uL10-like_sf"/>
</dbReference>
<dbReference type="InterPro" id="IPR022973">
    <property type="entry name" value="Ribosomal_uL10_bac"/>
</dbReference>
<dbReference type="InterPro" id="IPR047865">
    <property type="entry name" value="Ribosomal_uL10_bac_type"/>
</dbReference>
<dbReference type="InterPro" id="IPR002363">
    <property type="entry name" value="Ribosomal_uL10_CS_bac"/>
</dbReference>
<dbReference type="NCBIfam" id="NF000955">
    <property type="entry name" value="PRK00099.1-1"/>
    <property type="match status" value="1"/>
</dbReference>
<dbReference type="PANTHER" id="PTHR11560">
    <property type="entry name" value="39S RIBOSOMAL PROTEIN L10, MITOCHONDRIAL"/>
    <property type="match status" value="1"/>
</dbReference>
<dbReference type="Pfam" id="PF00466">
    <property type="entry name" value="Ribosomal_L10"/>
    <property type="match status" value="1"/>
</dbReference>
<dbReference type="SUPFAM" id="SSF160369">
    <property type="entry name" value="Ribosomal protein L10-like"/>
    <property type="match status" value="1"/>
</dbReference>
<dbReference type="PROSITE" id="PS01109">
    <property type="entry name" value="RIBOSOMAL_L10"/>
    <property type="match status" value="1"/>
</dbReference>
<protein>
    <recommendedName>
        <fullName evidence="1">Large ribosomal subunit protein uL10</fullName>
    </recommendedName>
    <alternativeName>
        <fullName evidence="2">50S ribosomal protein L10</fullName>
    </alternativeName>
</protein>
<keyword id="KW-1185">Reference proteome</keyword>
<keyword id="KW-0687">Ribonucleoprotein</keyword>
<keyword id="KW-0689">Ribosomal protein</keyword>
<keyword id="KW-0694">RNA-binding</keyword>
<keyword id="KW-0699">rRNA-binding</keyword>
<comment type="function">
    <text evidence="1">Forms part of the ribosomal stalk, playing a central role in the interaction of the ribosome with GTP-bound translation factors.</text>
</comment>
<comment type="subunit">
    <text evidence="1">Part of the ribosomal stalk of the 50S ribosomal subunit. The N-terminus interacts with L11 and the large rRNA to form the base of the stalk. The C-terminus forms an elongated spine to which L12 dimers bind in a sequential fashion forming a multimeric L10(L12)X complex.</text>
</comment>
<comment type="similarity">
    <text evidence="1">Belongs to the universal ribosomal protein uL10 family.</text>
</comment>
<sequence length="175" mass="18782">MALNVFQKQEVVKELAGVATKAHSLIVAEYAGITVPQMTAMRKQARESGVYLKVVKNKLAARALGDTEYAVIKEKLIGPLLYAFSLEDPGAAGRLIKEFSKKHDKLKSKAVSLGGVLYPAGHVDVLASLPTRLQALAMLARVLSEPVTLFARAIKAMADDKSETFAVSSPETSEA</sequence>
<proteinExistence type="inferred from homology"/>
<gene>
    <name evidence="1" type="primary">rplJ</name>
    <name type="ordered locus">PD_2003</name>
</gene>
<name>RL10_XYLFT</name>
<feature type="chain" id="PRO_0000154752" description="Large ribosomal subunit protein uL10">
    <location>
        <begin position="1"/>
        <end position="175"/>
    </location>
</feature>